<organism>
    <name type="scientific">Streptococcus pneumoniae (strain P1031)</name>
    <dbReference type="NCBI Taxonomy" id="488223"/>
    <lineage>
        <taxon>Bacteria</taxon>
        <taxon>Bacillati</taxon>
        <taxon>Bacillota</taxon>
        <taxon>Bacilli</taxon>
        <taxon>Lactobacillales</taxon>
        <taxon>Streptococcaceae</taxon>
        <taxon>Streptococcus</taxon>
    </lineage>
</organism>
<protein>
    <recommendedName>
        <fullName evidence="1">Cell division protein SepF</fullName>
    </recommendedName>
</protein>
<feature type="chain" id="PRO_1000164547" description="Cell division protein SepF">
    <location>
        <begin position="1"/>
        <end position="179"/>
    </location>
</feature>
<feature type="region of interest" description="Disordered" evidence="2">
    <location>
        <begin position="22"/>
        <end position="53"/>
    </location>
</feature>
<feature type="compositionally biased region" description="Polar residues" evidence="2">
    <location>
        <begin position="34"/>
        <end position="53"/>
    </location>
</feature>
<evidence type="ECO:0000255" key="1">
    <source>
        <dbReference type="HAMAP-Rule" id="MF_01197"/>
    </source>
</evidence>
<evidence type="ECO:0000256" key="2">
    <source>
        <dbReference type="SAM" id="MobiDB-lite"/>
    </source>
</evidence>
<comment type="function">
    <text evidence="1">Cell division protein that is part of the divisome complex and is recruited early to the Z-ring. Probably stimulates Z-ring formation, perhaps through the cross-linking of FtsZ protofilaments. Its function overlaps with FtsA.</text>
</comment>
<comment type="subunit">
    <text evidence="1">Homodimer. Interacts with FtsZ.</text>
</comment>
<comment type="subcellular location">
    <subcellularLocation>
        <location evidence="1">Cytoplasm</location>
    </subcellularLocation>
    <text evidence="1">Localizes to the division site, in a FtsZ-dependent manner.</text>
</comment>
<comment type="similarity">
    <text evidence="1">Belongs to the SepF family.</text>
</comment>
<dbReference type="EMBL" id="CP000920">
    <property type="protein sequence ID" value="ACO21647.1"/>
    <property type="molecule type" value="Genomic_DNA"/>
</dbReference>
<dbReference type="RefSeq" id="WP_000053386.1">
    <property type="nucleotide sequence ID" value="NC_012467.1"/>
</dbReference>
<dbReference type="SMR" id="C1CM03"/>
<dbReference type="KEGG" id="spp:SPP_1682"/>
<dbReference type="HOGENOM" id="CLU_078499_2_0_9"/>
<dbReference type="GO" id="GO:0005737">
    <property type="term" value="C:cytoplasm"/>
    <property type="evidence" value="ECO:0007669"/>
    <property type="project" value="UniProtKB-SubCell"/>
</dbReference>
<dbReference type="GO" id="GO:0000917">
    <property type="term" value="P:division septum assembly"/>
    <property type="evidence" value="ECO:0007669"/>
    <property type="project" value="UniProtKB-KW"/>
</dbReference>
<dbReference type="GO" id="GO:0043093">
    <property type="term" value="P:FtsZ-dependent cytokinesis"/>
    <property type="evidence" value="ECO:0007669"/>
    <property type="project" value="UniProtKB-UniRule"/>
</dbReference>
<dbReference type="Gene3D" id="3.30.110.150">
    <property type="entry name" value="SepF-like protein"/>
    <property type="match status" value="1"/>
</dbReference>
<dbReference type="HAMAP" id="MF_01197">
    <property type="entry name" value="SepF"/>
    <property type="match status" value="1"/>
</dbReference>
<dbReference type="InterPro" id="IPR023052">
    <property type="entry name" value="Cell_div_SepF"/>
</dbReference>
<dbReference type="InterPro" id="IPR007561">
    <property type="entry name" value="Cell_div_SepF/SepF-rel"/>
</dbReference>
<dbReference type="InterPro" id="IPR038594">
    <property type="entry name" value="SepF-like_sf"/>
</dbReference>
<dbReference type="PANTHER" id="PTHR35798">
    <property type="entry name" value="CELL DIVISION PROTEIN SEPF"/>
    <property type="match status" value="1"/>
</dbReference>
<dbReference type="PANTHER" id="PTHR35798:SF1">
    <property type="entry name" value="CELL DIVISION PROTEIN SEPF"/>
    <property type="match status" value="1"/>
</dbReference>
<dbReference type="Pfam" id="PF04472">
    <property type="entry name" value="SepF"/>
    <property type="match status" value="1"/>
</dbReference>
<sequence>MSLKDRFDRFIDYFTEDEDSSLPYEKRDEPVFTPVNSSQEPALPMNQPSQSVGTKENNITRLHARQQELANQSQRATDKVIIDVRYPRKYEDATEIVDLLAGNESILIDFQYMTEVQARRCLDYLDGACHVLAGNLKKVASTMYLLTPVNVIVNVEDIRLPDEDQQGEFGFDMKRNRVR</sequence>
<gene>
    <name evidence="1" type="primary">sepF</name>
    <name type="ordered locus">SPP_1682</name>
</gene>
<accession>C1CM03</accession>
<keyword id="KW-0131">Cell cycle</keyword>
<keyword id="KW-0132">Cell division</keyword>
<keyword id="KW-0963">Cytoplasm</keyword>
<keyword id="KW-0717">Septation</keyword>
<proteinExistence type="inferred from homology"/>
<name>SEPF_STRZP</name>
<reference key="1">
    <citation type="journal article" date="2010" name="Genome Biol.">
        <title>Structure and dynamics of the pan-genome of Streptococcus pneumoniae and closely related species.</title>
        <authorList>
            <person name="Donati C."/>
            <person name="Hiller N.L."/>
            <person name="Tettelin H."/>
            <person name="Muzzi A."/>
            <person name="Croucher N.J."/>
            <person name="Angiuoli S.V."/>
            <person name="Oggioni M."/>
            <person name="Dunning Hotopp J.C."/>
            <person name="Hu F.Z."/>
            <person name="Riley D.R."/>
            <person name="Covacci A."/>
            <person name="Mitchell T.J."/>
            <person name="Bentley S.D."/>
            <person name="Kilian M."/>
            <person name="Ehrlich G.D."/>
            <person name="Rappuoli R."/>
            <person name="Moxon E.R."/>
            <person name="Masignani V."/>
        </authorList>
    </citation>
    <scope>NUCLEOTIDE SEQUENCE [LARGE SCALE GENOMIC DNA]</scope>
    <source>
        <strain>P1031</strain>
    </source>
</reference>